<name>NADE_SALA4</name>
<accession>B5F7I4</accession>
<organism>
    <name type="scientific">Salmonella agona (strain SL483)</name>
    <dbReference type="NCBI Taxonomy" id="454166"/>
    <lineage>
        <taxon>Bacteria</taxon>
        <taxon>Pseudomonadati</taxon>
        <taxon>Pseudomonadota</taxon>
        <taxon>Gammaproteobacteria</taxon>
        <taxon>Enterobacterales</taxon>
        <taxon>Enterobacteriaceae</taxon>
        <taxon>Salmonella</taxon>
    </lineage>
</organism>
<keyword id="KW-0067">ATP-binding</keyword>
<keyword id="KW-0436">Ligase</keyword>
<keyword id="KW-0460">Magnesium</keyword>
<keyword id="KW-0479">Metal-binding</keyword>
<keyword id="KW-0520">NAD</keyword>
<keyword id="KW-0547">Nucleotide-binding</keyword>
<dbReference type="EC" id="6.3.1.5" evidence="1"/>
<dbReference type="EMBL" id="CP001138">
    <property type="protein sequence ID" value="ACH50125.1"/>
    <property type="molecule type" value="Genomic_DNA"/>
</dbReference>
<dbReference type="RefSeq" id="WP_000174979.1">
    <property type="nucleotide sequence ID" value="NC_011149.1"/>
</dbReference>
<dbReference type="SMR" id="B5F7I4"/>
<dbReference type="KEGG" id="sea:SeAg_B1861"/>
<dbReference type="HOGENOM" id="CLU_059327_3_0_6"/>
<dbReference type="UniPathway" id="UPA00253">
    <property type="reaction ID" value="UER00333"/>
</dbReference>
<dbReference type="Proteomes" id="UP000008819">
    <property type="component" value="Chromosome"/>
</dbReference>
<dbReference type="GO" id="GO:0005737">
    <property type="term" value="C:cytoplasm"/>
    <property type="evidence" value="ECO:0007669"/>
    <property type="project" value="InterPro"/>
</dbReference>
<dbReference type="GO" id="GO:0005524">
    <property type="term" value="F:ATP binding"/>
    <property type="evidence" value="ECO:0007669"/>
    <property type="project" value="UniProtKB-UniRule"/>
</dbReference>
<dbReference type="GO" id="GO:0004359">
    <property type="term" value="F:glutaminase activity"/>
    <property type="evidence" value="ECO:0007669"/>
    <property type="project" value="InterPro"/>
</dbReference>
<dbReference type="GO" id="GO:0046872">
    <property type="term" value="F:metal ion binding"/>
    <property type="evidence" value="ECO:0007669"/>
    <property type="project" value="UniProtKB-KW"/>
</dbReference>
<dbReference type="GO" id="GO:0003952">
    <property type="term" value="F:NAD+ synthase (glutamine-hydrolyzing) activity"/>
    <property type="evidence" value="ECO:0007669"/>
    <property type="project" value="InterPro"/>
</dbReference>
<dbReference type="GO" id="GO:0008795">
    <property type="term" value="F:NAD+ synthase activity"/>
    <property type="evidence" value="ECO:0007669"/>
    <property type="project" value="UniProtKB-UniRule"/>
</dbReference>
<dbReference type="GO" id="GO:0009435">
    <property type="term" value="P:NAD biosynthetic process"/>
    <property type="evidence" value="ECO:0007669"/>
    <property type="project" value="UniProtKB-UniRule"/>
</dbReference>
<dbReference type="CDD" id="cd00553">
    <property type="entry name" value="NAD_synthase"/>
    <property type="match status" value="1"/>
</dbReference>
<dbReference type="FunFam" id="3.40.50.620:FF:000015">
    <property type="entry name" value="NH(3)-dependent NAD(+) synthetase"/>
    <property type="match status" value="1"/>
</dbReference>
<dbReference type="Gene3D" id="3.40.50.620">
    <property type="entry name" value="HUPs"/>
    <property type="match status" value="1"/>
</dbReference>
<dbReference type="HAMAP" id="MF_00193">
    <property type="entry name" value="NadE_ammonia_dep"/>
    <property type="match status" value="1"/>
</dbReference>
<dbReference type="InterPro" id="IPR022310">
    <property type="entry name" value="NAD/GMP_synthase"/>
</dbReference>
<dbReference type="InterPro" id="IPR003694">
    <property type="entry name" value="NAD_synthase"/>
</dbReference>
<dbReference type="InterPro" id="IPR022926">
    <property type="entry name" value="NH(3)-dep_NAD(+)_synth"/>
</dbReference>
<dbReference type="InterPro" id="IPR014729">
    <property type="entry name" value="Rossmann-like_a/b/a_fold"/>
</dbReference>
<dbReference type="NCBIfam" id="TIGR00552">
    <property type="entry name" value="nadE"/>
    <property type="match status" value="1"/>
</dbReference>
<dbReference type="NCBIfam" id="NF001979">
    <property type="entry name" value="PRK00768.1"/>
    <property type="match status" value="1"/>
</dbReference>
<dbReference type="PANTHER" id="PTHR23090">
    <property type="entry name" value="NH 3 /GLUTAMINE-DEPENDENT NAD + SYNTHETASE"/>
    <property type="match status" value="1"/>
</dbReference>
<dbReference type="PANTHER" id="PTHR23090:SF7">
    <property type="entry name" value="NH(3)-DEPENDENT NAD(+) SYNTHETASE"/>
    <property type="match status" value="1"/>
</dbReference>
<dbReference type="Pfam" id="PF02540">
    <property type="entry name" value="NAD_synthase"/>
    <property type="match status" value="1"/>
</dbReference>
<dbReference type="SUPFAM" id="SSF52402">
    <property type="entry name" value="Adenine nucleotide alpha hydrolases-like"/>
    <property type="match status" value="1"/>
</dbReference>
<protein>
    <recommendedName>
        <fullName evidence="1">NH(3)-dependent NAD(+) synthetase</fullName>
        <ecNumber evidence="1">6.3.1.5</ecNumber>
    </recommendedName>
</protein>
<comment type="function">
    <text evidence="1">Catalyzes the ATP-dependent amidation of deamido-NAD to form NAD. Uses ammonia as a nitrogen source.</text>
</comment>
<comment type="catalytic activity">
    <reaction evidence="1">
        <text>deamido-NAD(+) + NH4(+) + ATP = AMP + diphosphate + NAD(+) + H(+)</text>
        <dbReference type="Rhea" id="RHEA:21188"/>
        <dbReference type="ChEBI" id="CHEBI:15378"/>
        <dbReference type="ChEBI" id="CHEBI:28938"/>
        <dbReference type="ChEBI" id="CHEBI:30616"/>
        <dbReference type="ChEBI" id="CHEBI:33019"/>
        <dbReference type="ChEBI" id="CHEBI:57540"/>
        <dbReference type="ChEBI" id="CHEBI:58437"/>
        <dbReference type="ChEBI" id="CHEBI:456215"/>
        <dbReference type="EC" id="6.3.1.5"/>
    </reaction>
</comment>
<comment type="pathway">
    <text evidence="1">Cofactor biosynthesis; NAD(+) biosynthesis; NAD(+) from deamido-NAD(+) (ammonia route): step 1/1.</text>
</comment>
<comment type="subunit">
    <text evidence="1">Homodimer.</text>
</comment>
<comment type="similarity">
    <text evidence="1">Belongs to the NAD synthetase family.</text>
</comment>
<proteinExistence type="inferred from homology"/>
<sequence length="275" mass="30418">MTLQQEIIQALGAKPHINPEEEIRRSVDFLKAYLKTYPFLKSLVLGISGGQDSTLAGKLSQMAIAELREETGDNALQFIAVRLPYGAQADEQDCQDAIAFIQPDRVLTVNIKGAVLASEQALREAGIELSDFVRGNEKARERMKAQYSIAGMTHGVVVGTDHAAEAITGFFTKYGDGGTDINPLHRLNKRQGKQLLAALGCPEHLYKKVPTADLEDDRPSLPDEAALGVTYDNIDDYLEGKTLDSAIAKTIEGWYVKTEHKRRLPITVFDDFWKK</sequence>
<gene>
    <name evidence="1" type="primary">nadE</name>
    <name type="ordered locus">SeAg_B1861</name>
</gene>
<reference key="1">
    <citation type="journal article" date="2011" name="J. Bacteriol.">
        <title>Comparative genomics of 28 Salmonella enterica isolates: evidence for CRISPR-mediated adaptive sublineage evolution.</title>
        <authorList>
            <person name="Fricke W.F."/>
            <person name="Mammel M.K."/>
            <person name="McDermott P.F."/>
            <person name="Tartera C."/>
            <person name="White D.G."/>
            <person name="Leclerc J.E."/>
            <person name="Ravel J."/>
            <person name="Cebula T.A."/>
        </authorList>
    </citation>
    <scope>NUCLEOTIDE SEQUENCE [LARGE SCALE GENOMIC DNA]</scope>
    <source>
        <strain>SL483</strain>
    </source>
</reference>
<evidence type="ECO:0000255" key="1">
    <source>
        <dbReference type="HAMAP-Rule" id="MF_00193"/>
    </source>
</evidence>
<feature type="chain" id="PRO_1000099037" description="NH(3)-dependent NAD(+) synthetase">
    <location>
        <begin position="1"/>
        <end position="275"/>
    </location>
</feature>
<feature type="binding site" evidence="1">
    <location>
        <begin position="46"/>
        <end position="53"/>
    </location>
    <ligand>
        <name>ATP</name>
        <dbReference type="ChEBI" id="CHEBI:30616"/>
    </ligand>
</feature>
<feature type="binding site" evidence="1">
    <location>
        <position position="52"/>
    </location>
    <ligand>
        <name>Mg(2+)</name>
        <dbReference type="ChEBI" id="CHEBI:18420"/>
    </ligand>
</feature>
<feature type="binding site" evidence="1">
    <location>
        <position position="140"/>
    </location>
    <ligand>
        <name>deamido-NAD(+)</name>
        <dbReference type="ChEBI" id="CHEBI:58437"/>
    </ligand>
</feature>
<feature type="binding site" evidence="1">
    <location>
        <position position="160"/>
    </location>
    <ligand>
        <name>ATP</name>
        <dbReference type="ChEBI" id="CHEBI:30616"/>
    </ligand>
</feature>
<feature type="binding site" evidence="1">
    <location>
        <position position="165"/>
    </location>
    <ligand>
        <name>Mg(2+)</name>
        <dbReference type="ChEBI" id="CHEBI:18420"/>
    </ligand>
</feature>
<feature type="binding site" evidence="1">
    <location>
        <position position="173"/>
    </location>
    <ligand>
        <name>deamido-NAD(+)</name>
        <dbReference type="ChEBI" id="CHEBI:58437"/>
    </ligand>
</feature>
<feature type="binding site" evidence="1">
    <location>
        <position position="180"/>
    </location>
    <ligand>
        <name>deamido-NAD(+)</name>
        <dbReference type="ChEBI" id="CHEBI:58437"/>
    </ligand>
</feature>
<feature type="binding site" evidence="1">
    <location>
        <position position="189"/>
    </location>
    <ligand>
        <name>ATP</name>
        <dbReference type="ChEBI" id="CHEBI:30616"/>
    </ligand>
</feature>
<feature type="binding site" evidence="1">
    <location>
        <position position="211"/>
    </location>
    <ligand>
        <name>ATP</name>
        <dbReference type="ChEBI" id="CHEBI:30616"/>
    </ligand>
</feature>
<feature type="binding site" evidence="1">
    <location>
        <begin position="260"/>
        <end position="261"/>
    </location>
    <ligand>
        <name>deamido-NAD(+)</name>
        <dbReference type="ChEBI" id="CHEBI:58437"/>
    </ligand>
</feature>